<reference key="1">
    <citation type="submission" date="2008-02" db="EMBL/GenBank/DDBJ databases">
        <title>Complete sequence of Pseudomonas putida W619.</title>
        <authorList>
            <person name="Copeland A."/>
            <person name="Lucas S."/>
            <person name="Lapidus A."/>
            <person name="Barry K."/>
            <person name="Detter J.C."/>
            <person name="Glavina del Rio T."/>
            <person name="Dalin E."/>
            <person name="Tice H."/>
            <person name="Pitluck S."/>
            <person name="Chain P."/>
            <person name="Malfatti S."/>
            <person name="Shin M."/>
            <person name="Vergez L."/>
            <person name="Schmutz J."/>
            <person name="Larimer F."/>
            <person name="Land M."/>
            <person name="Hauser L."/>
            <person name="Kyrpides N."/>
            <person name="Kim E."/>
            <person name="Taghavi S."/>
            <person name="Vangronsveld D."/>
            <person name="van der Lelie D."/>
            <person name="Richardson P."/>
        </authorList>
    </citation>
    <scope>NUCLEOTIDE SEQUENCE [LARGE SCALE GENOMIC DNA]</scope>
    <source>
        <strain>W619</strain>
    </source>
</reference>
<name>CBPA_PSEPW</name>
<organism>
    <name type="scientific">Pseudomonas putida (strain W619)</name>
    <dbReference type="NCBI Taxonomy" id="390235"/>
    <lineage>
        <taxon>Bacteria</taxon>
        <taxon>Pseudomonadati</taxon>
        <taxon>Pseudomonadota</taxon>
        <taxon>Gammaproteobacteria</taxon>
        <taxon>Pseudomonadales</taxon>
        <taxon>Pseudomonadaceae</taxon>
        <taxon>Pseudomonas</taxon>
    </lineage>
</organism>
<evidence type="ECO:0000255" key="1">
    <source>
        <dbReference type="HAMAP-Rule" id="MF_01154"/>
    </source>
</evidence>
<dbReference type="EMBL" id="CP000949">
    <property type="protein sequence ID" value="ACA75120.1"/>
    <property type="molecule type" value="Genomic_DNA"/>
</dbReference>
<dbReference type="SMR" id="B1J5W7"/>
<dbReference type="STRING" id="390235.PputW619_4640"/>
<dbReference type="KEGG" id="ppw:PputW619_4640"/>
<dbReference type="eggNOG" id="COG0484">
    <property type="taxonomic scope" value="Bacteria"/>
</dbReference>
<dbReference type="HOGENOM" id="CLU_017633_0_0_6"/>
<dbReference type="OrthoDB" id="9779889at2"/>
<dbReference type="GO" id="GO:0005737">
    <property type="term" value="C:cytoplasm"/>
    <property type="evidence" value="ECO:0007669"/>
    <property type="project" value="UniProtKB-UniRule"/>
</dbReference>
<dbReference type="GO" id="GO:0009295">
    <property type="term" value="C:nucleoid"/>
    <property type="evidence" value="ECO:0007669"/>
    <property type="project" value="UniProtKB-SubCell"/>
</dbReference>
<dbReference type="GO" id="GO:0003681">
    <property type="term" value="F:bent DNA binding"/>
    <property type="evidence" value="ECO:0007669"/>
    <property type="project" value="UniProtKB-UniRule"/>
</dbReference>
<dbReference type="GO" id="GO:0051082">
    <property type="term" value="F:unfolded protein binding"/>
    <property type="evidence" value="ECO:0007669"/>
    <property type="project" value="InterPro"/>
</dbReference>
<dbReference type="GO" id="GO:0051085">
    <property type="term" value="P:chaperone cofactor-dependent protein refolding"/>
    <property type="evidence" value="ECO:0007669"/>
    <property type="project" value="TreeGrafter"/>
</dbReference>
<dbReference type="GO" id="GO:0042026">
    <property type="term" value="P:protein refolding"/>
    <property type="evidence" value="ECO:0007669"/>
    <property type="project" value="TreeGrafter"/>
</dbReference>
<dbReference type="CDD" id="cd06257">
    <property type="entry name" value="DnaJ"/>
    <property type="match status" value="1"/>
</dbReference>
<dbReference type="CDD" id="cd10747">
    <property type="entry name" value="DnaJ_C"/>
    <property type="match status" value="1"/>
</dbReference>
<dbReference type="FunFam" id="2.60.260.20:FF:000008">
    <property type="entry name" value="Curved DNA-binding protein"/>
    <property type="match status" value="1"/>
</dbReference>
<dbReference type="FunFam" id="2.60.260.20:FF:000013">
    <property type="entry name" value="DnaJ subfamily B member 11"/>
    <property type="match status" value="1"/>
</dbReference>
<dbReference type="Gene3D" id="1.10.287.110">
    <property type="entry name" value="DnaJ domain"/>
    <property type="match status" value="1"/>
</dbReference>
<dbReference type="Gene3D" id="1.20.5.460">
    <property type="entry name" value="Single helix bin"/>
    <property type="match status" value="1"/>
</dbReference>
<dbReference type="Gene3D" id="2.60.260.20">
    <property type="entry name" value="Urease metallochaperone UreE, N-terminal domain"/>
    <property type="match status" value="2"/>
</dbReference>
<dbReference type="HAMAP" id="MF_01154">
    <property type="entry name" value="CbpA"/>
    <property type="match status" value="1"/>
</dbReference>
<dbReference type="InterPro" id="IPR023859">
    <property type="entry name" value="DNA-bd_curved-DNA"/>
</dbReference>
<dbReference type="InterPro" id="IPR002939">
    <property type="entry name" value="DnaJ_C"/>
</dbReference>
<dbReference type="InterPro" id="IPR001623">
    <property type="entry name" value="DnaJ_domain"/>
</dbReference>
<dbReference type="InterPro" id="IPR018253">
    <property type="entry name" value="DnaJ_domain_CS"/>
</dbReference>
<dbReference type="InterPro" id="IPR008971">
    <property type="entry name" value="HSP40/DnaJ_pept-bd"/>
</dbReference>
<dbReference type="InterPro" id="IPR036869">
    <property type="entry name" value="J_dom_sf"/>
</dbReference>
<dbReference type="NCBIfam" id="NF007618">
    <property type="entry name" value="PRK10266.1"/>
    <property type="match status" value="1"/>
</dbReference>
<dbReference type="PANTHER" id="PTHR43096">
    <property type="entry name" value="DNAJ HOMOLOG 1, MITOCHONDRIAL-RELATED"/>
    <property type="match status" value="1"/>
</dbReference>
<dbReference type="PANTHER" id="PTHR43096:SF52">
    <property type="entry name" value="DNAJ HOMOLOG 1, MITOCHONDRIAL-RELATED"/>
    <property type="match status" value="1"/>
</dbReference>
<dbReference type="Pfam" id="PF00226">
    <property type="entry name" value="DnaJ"/>
    <property type="match status" value="1"/>
</dbReference>
<dbReference type="Pfam" id="PF01556">
    <property type="entry name" value="DnaJ_C"/>
    <property type="match status" value="1"/>
</dbReference>
<dbReference type="PRINTS" id="PR00625">
    <property type="entry name" value="JDOMAIN"/>
</dbReference>
<dbReference type="SMART" id="SM00271">
    <property type="entry name" value="DnaJ"/>
    <property type="match status" value="1"/>
</dbReference>
<dbReference type="SUPFAM" id="SSF46565">
    <property type="entry name" value="Chaperone J-domain"/>
    <property type="match status" value="1"/>
</dbReference>
<dbReference type="SUPFAM" id="SSF49493">
    <property type="entry name" value="HSP40/DnaJ peptide-binding domain"/>
    <property type="match status" value="2"/>
</dbReference>
<dbReference type="PROSITE" id="PS00636">
    <property type="entry name" value="DNAJ_1"/>
    <property type="match status" value="1"/>
</dbReference>
<dbReference type="PROSITE" id="PS50076">
    <property type="entry name" value="DNAJ_2"/>
    <property type="match status" value="1"/>
</dbReference>
<sequence length="317" mass="34552">MDFKDYYKILGVEPTADEKAIKAAYRKLARKYHPDVSKERDAEEKFKEANEAYEVLGDAQKRAEFDEIRKYGGQHGRPFQAPPGWENRGGAGGGFEGGDFSDFFSSIFGARGGNPFGGARQQRSAGRRGQDVELELAIFLEETLSKESKQISFQVPQTNAAGQRTGFTTKTLNVKIPAGVSDGERIRLKGQGAPGSAGGANGDLFLTIRMAPHPLFDVEGQDLIITVPLAPWEAALGTKVAVPTLDGKINLTIRPDSQSGQRLRVPGKGLANKQGERGNLYAQLKVVMPPASDASTRQLWTQLSEKAAFNPRTQWSK</sequence>
<accession>B1J5W7</accession>
<gene>
    <name evidence="1" type="primary">cbpA</name>
    <name type="ordered locus">PputW619_4640</name>
</gene>
<protein>
    <recommendedName>
        <fullName evidence="1">Curved DNA-binding protein</fullName>
    </recommendedName>
</protein>
<keyword id="KW-0143">Chaperone</keyword>
<keyword id="KW-0963">Cytoplasm</keyword>
<keyword id="KW-0238">DNA-binding</keyword>
<feature type="chain" id="PRO_1000137754" description="Curved DNA-binding protein">
    <location>
        <begin position="1"/>
        <end position="317"/>
    </location>
</feature>
<feature type="domain" description="J" evidence="1">
    <location>
        <begin position="5"/>
        <end position="69"/>
    </location>
</feature>
<proteinExistence type="inferred from homology"/>
<comment type="function">
    <text evidence="1">DNA-binding protein that preferentially recognizes a curved DNA sequence. It is probably a functional analog of DnaJ; displays overlapping activities with DnaJ, but functions under different conditions, probably acting as a molecular chaperone in an adaptive response to environmental stresses other than heat shock. Lacks autonomous chaperone activity; binds native substrates and targets them for recognition by DnaK. Its activity is inhibited by the binding of CbpM.</text>
</comment>
<comment type="subcellular location">
    <subcellularLocation>
        <location evidence="1">Cytoplasm</location>
        <location evidence="1">Nucleoid</location>
    </subcellularLocation>
</comment>